<organism>
    <name type="scientific">Ehrlichia canis (strain Jake)</name>
    <dbReference type="NCBI Taxonomy" id="269484"/>
    <lineage>
        <taxon>Bacteria</taxon>
        <taxon>Pseudomonadati</taxon>
        <taxon>Pseudomonadota</taxon>
        <taxon>Alphaproteobacteria</taxon>
        <taxon>Rickettsiales</taxon>
        <taxon>Anaplasmataceae</taxon>
        <taxon>Ehrlichia</taxon>
    </lineage>
</organism>
<accession>Q3YT22</accession>
<evidence type="ECO:0000255" key="1">
    <source>
        <dbReference type="HAMAP-Rule" id="MF_01416"/>
    </source>
</evidence>
<protein>
    <recommendedName>
        <fullName evidence="1">ATP synthase subunit delta</fullName>
    </recommendedName>
    <alternativeName>
        <fullName evidence="1">ATP synthase F(1) sector subunit delta</fullName>
    </alternativeName>
    <alternativeName>
        <fullName evidence="1">F-type ATPase subunit delta</fullName>
        <shortName evidence="1">F-ATPase subunit delta</shortName>
    </alternativeName>
</protein>
<keyword id="KW-0066">ATP synthesis</keyword>
<keyword id="KW-0997">Cell inner membrane</keyword>
<keyword id="KW-1003">Cell membrane</keyword>
<keyword id="KW-0139">CF(1)</keyword>
<keyword id="KW-0375">Hydrogen ion transport</keyword>
<keyword id="KW-0406">Ion transport</keyword>
<keyword id="KW-0472">Membrane</keyword>
<keyword id="KW-0813">Transport</keyword>
<proteinExistence type="inferred from homology"/>
<name>ATPD_EHRCJ</name>
<gene>
    <name evidence="1" type="primary">atpH</name>
    <name type="ordered locus">Ecaj_0082</name>
</gene>
<comment type="function">
    <text evidence="1">F(1)F(0) ATP synthase produces ATP from ADP in the presence of a proton or sodium gradient. F-type ATPases consist of two structural domains, F(1) containing the extramembraneous catalytic core and F(0) containing the membrane proton channel, linked together by a central stalk and a peripheral stalk. During catalysis, ATP synthesis in the catalytic domain of F(1) is coupled via a rotary mechanism of the central stalk subunits to proton translocation.</text>
</comment>
<comment type="function">
    <text evidence="1">This protein is part of the stalk that links CF(0) to CF(1). It either transmits conformational changes from CF(0) to CF(1) or is implicated in proton conduction.</text>
</comment>
<comment type="subunit">
    <text evidence="1">F-type ATPases have 2 components, F(1) - the catalytic core - and F(0) - the membrane proton channel. F(1) has five subunits: alpha(3), beta(3), gamma(1), delta(1), epsilon(1). F(0) has three main subunits: a(1), b(2) and c(10-14). The alpha and beta chains form an alternating ring which encloses part of the gamma chain. F(1) is attached to F(0) by a central stalk formed by the gamma and epsilon chains, while a peripheral stalk is formed by the delta and b chains.</text>
</comment>
<comment type="subcellular location">
    <subcellularLocation>
        <location evidence="1">Cell inner membrane</location>
        <topology evidence="1">Peripheral membrane protein</topology>
    </subcellularLocation>
</comment>
<comment type="similarity">
    <text evidence="1">Belongs to the ATPase delta chain family.</text>
</comment>
<dbReference type="EMBL" id="CP000107">
    <property type="protein sequence ID" value="AAZ68133.1"/>
    <property type="molecule type" value="Genomic_DNA"/>
</dbReference>
<dbReference type="SMR" id="Q3YT22"/>
<dbReference type="FunCoup" id="Q3YT22">
    <property type="interactions" value="247"/>
</dbReference>
<dbReference type="STRING" id="269484.Ecaj_0082"/>
<dbReference type="KEGG" id="ecn:Ecaj_0082"/>
<dbReference type="eggNOG" id="COG0712">
    <property type="taxonomic scope" value="Bacteria"/>
</dbReference>
<dbReference type="HOGENOM" id="CLU_085114_1_2_5"/>
<dbReference type="InParanoid" id="Q3YT22"/>
<dbReference type="Proteomes" id="UP000000435">
    <property type="component" value="Chromosome"/>
</dbReference>
<dbReference type="GO" id="GO:0005886">
    <property type="term" value="C:plasma membrane"/>
    <property type="evidence" value="ECO:0007669"/>
    <property type="project" value="UniProtKB-SubCell"/>
</dbReference>
<dbReference type="GO" id="GO:0045259">
    <property type="term" value="C:proton-transporting ATP synthase complex"/>
    <property type="evidence" value="ECO:0007669"/>
    <property type="project" value="UniProtKB-KW"/>
</dbReference>
<dbReference type="GO" id="GO:0046933">
    <property type="term" value="F:proton-transporting ATP synthase activity, rotational mechanism"/>
    <property type="evidence" value="ECO:0007669"/>
    <property type="project" value="UniProtKB-UniRule"/>
</dbReference>
<dbReference type="Gene3D" id="1.10.520.20">
    <property type="entry name" value="N-terminal domain of the delta subunit of the F1F0-ATP synthase"/>
    <property type="match status" value="1"/>
</dbReference>
<dbReference type="HAMAP" id="MF_01416">
    <property type="entry name" value="ATP_synth_delta_bact"/>
    <property type="match status" value="1"/>
</dbReference>
<dbReference type="InterPro" id="IPR026015">
    <property type="entry name" value="ATP_synth_OSCP/delta_N_sf"/>
</dbReference>
<dbReference type="InterPro" id="IPR020781">
    <property type="entry name" value="ATPase_OSCP/d_CS"/>
</dbReference>
<dbReference type="InterPro" id="IPR000711">
    <property type="entry name" value="ATPase_OSCP/dsu"/>
</dbReference>
<dbReference type="NCBIfam" id="TIGR01145">
    <property type="entry name" value="ATP_synt_delta"/>
    <property type="match status" value="1"/>
</dbReference>
<dbReference type="PANTHER" id="PTHR11910">
    <property type="entry name" value="ATP SYNTHASE DELTA CHAIN"/>
    <property type="match status" value="1"/>
</dbReference>
<dbReference type="Pfam" id="PF00213">
    <property type="entry name" value="OSCP"/>
    <property type="match status" value="1"/>
</dbReference>
<dbReference type="PRINTS" id="PR00125">
    <property type="entry name" value="ATPASEDELTA"/>
</dbReference>
<dbReference type="SUPFAM" id="SSF47928">
    <property type="entry name" value="N-terminal domain of the delta subunit of the F1F0-ATP synthase"/>
    <property type="match status" value="1"/>
</dbReference>
<dbReference type="PROSITE" id="PS00389">
    <property type="entry name" value="ATPASE_DELTA"/>
    <property type="match status" value="1"/>
</dbReference>
<reference key="1">
    <citation type="journal article" date="2006" name="J. Bacteriol.">
        <title>The genome of the obligately intracellular bacterium Ehrlichia canis reveals themes of complex membrane structure and immune evasion strategies.</title>
        <authorList>
            <person name="Mavromatis K."/>
            <person name="Doyle C.K."/>
            <person name="Lykidis A."/>
            <person name="Ivanova N."/>
            <person name="Francino M.P."/>
            <person name="Chain P."/>
            <person name="Shin M."/>
            <person name="Malfatti S."/>
            <person name="Larimer F."/>
            <person name="Copeland A."/>
            <person name="Detter J.C."/>
            <person name="Land M."/>
            <person name="Richardson P.M."/>
            <person name="Yu X.J."/>
            <person name="Walker D.H."/>
            <person name="McBride J.W."/>
            <person name="Kyrpides N.C."/>
        </authorList>
    </citation>
    <scope>NUCLEOTIDE SEQUENCE [LARGE SCALE GENOMIC DNA]</scope>
    <source>
        <strain>Jake</strain>
    </source>
</reference>
<feature type="chain" id="PRO_1000184703" description="ATP synthase subunit delta">
    <location>
        <begin position="1"/>
        <end position="183"/>
    </location>
</feature>
<sequence length="183" mass="20356">MTQYRGGYIASCYAQALFSVSDVNSICKDVEFVISVLENDNNVAMFLSSPRVSKESKISLIKVIGDYIDSILVKFMIIVIESNRGNILLQIFSAFLDLVRKYNKEVNISVTSCALLTKQEEEGICNALLERYGKVVGITNNLDPSILGGFIIRVNFDVIDVSLNSYLQSLRELSKMSVCSISE</sequence>